<sequence>MRLVKKEFPDVGELVIGTVKKIAEHGAYVYLDEYDLEAFAPTQEIVQSWFHSIRDYVKEGNKTVFKVISVNPKMRVVEVSLKRVRVDEKEKKLLLYRHRVRVLKLLEIAMKKLNRPAEEALKVMWYLEEQFGDPFKVFEEVVKTGPHVLDDLQLDAKLKEIIIELARQQVELPPTKISGIIKIVSVEGDGVEKIKAALIELEKTLREKFPQISTKIYVVGPPRYRIDLTGQQPKQVEAAFSEAANILQALQKKYKVIGNIQRIEQ</sequence>
<organism>
    <name type="scientific">Pyrobaculum aerophilum (strain ATCC 51768 / DSM 7523 / JCM 9630 / CIP 104966 / NBRC 100827 / IM2)</name>
    <dbReference type="NCBI Taxonomy" id="178306"/>
    <lineage>
        <taxon>Archaea</taxon>
        <taxon>Thermoproteota</taxon>
        <taxon>Thermoprotei</taxon>
        <taxon>Thermoproteales</taxon>
        <taxon>Thermoproteaceae</taxon>
        <taxon>Pyrobaculum</taxon>
    </lineage>
</organism>
<dbReference type="EMBL" id="AE009441">
    <property type="protein sequence ID" value="AAL64624.1"/>
    <property type="molecule type" value="Genomic_DNA"/>
</dbReference>
<dbReference type="RefSeq" id="WP_011009092.1">
    <property type="nucleotide sequence ID" value="NC_003364.1"/>
</dbReference>
<dbReference type="SMR" id="Q8ZTY5"/>
<dbReference type="FunCoup" id="Q8ZTY5">
    <property type="interactions" value="246"/>
</dbReference>
<dbReference type="STRING" id="178306.PAE3032"/>
<dbReference type="EnsemblBacteria" id="AAL64624">
    <property type="protein sequence ID" value="AAL64624"/>
    <property type="gene ID" value="PAE3032"/>
</dbReference>
<dbReference type="GeneID" id="1463793"/>
<dbReference type="KEGG" id="pai:PAE3032"/>
<dbReference type="PATRIC" id="fig|178306.9.peg.2281"/>
<dbReference type="eggNOG" id="arCOG04107">
    <property type="taxonomic scope" value="Archaea"/>
</dbReference>
<dbReference type="HOGENOM" id="CLU_033458_0_2_2"/>
<dbReference type="InParanoid" id="Q8ZTY5"/>
<dbReference type="Proteomes" id="UP000002439">
    <property type="component" value="Chromosome"/>
</dbReference>
<dbReference type="GO" id="GO:0043022">
    <property type="term" value="F:ribosome binding"/>
    <property type="evidence" value="ECO:0000318"/>
    <property type="project" value="GO_Central"/>
</dbReference>
<dbReference type="GO" id="GO:0003723">
    <property type="term" value="F:RNA binding"/>
    <property type="evidence" value="ECO:0007669"/>
    <property type="project" value="UniProtKB-UniRule"/>
</dbReference>
<dbReference type="GO" id="GO:0003743">
    <property type="term" value="F:translation initiation factor activity"/>
    <property type="evidence" value="ECO:0000318"/>
    <property type="project" value="GO_Central"/>
</dbReference>
<dbReference type="GO" id="GO:0006413">
    <property type="term" value="P:translational initiation"/>
    <property type="evidence" value="ECO:0000318"/>
    <property type="project" value="GO_Central"/>
</dbReference>
<dbReference type="CDD" id="cd04452">
    <property type="entry name" value="S1_IF2_alpha"/>
    <property type="match status" value="1"/>
</dbReference>
<dbReference type="FunFam" id="2.40.50.140:FF:000015">
    <property type="entry name" value="Eukaryotic translation initiation factor 2 subunit alpha"/>
    <property type="match status" value="1"/>
</dbReference>
<dbReference type="FunFam" id="1.10.150.190:FF:000006">
    <property type="entry name" value="Translation initiation factor 2 subunit alpha"/>
    <property type="match status" value="1"/>
</dbReference>
<dbReference type="FunFam" id="3.30.70.1130:FF:000002">
    <property type="entry name" value="Translation initiation factor 2 subunit alpha"/>
    <property type="match status" value="1"/>
</dbReference>
<dbReference type="Gene3D" id="3.30.70.1130">
    <property type="entry name" value="EIF_2_alpha"/>
    <property type="match status" value="1"/>
</dbReference>
<dbReference type="Gene3D" id="2.40.50.140">
    <property type="entry name" value="Nucleic acid-binding proteins"/>
    <property type="match status" value="1"/>
</dbReference>
<dbReference type="Gene3D" id="1.10.150.190">
    <property type="entry name" value="Translation initiation factor 2, subunit 1, domain 2"/>
    <property type="match status" value="1"/>
</dbReference>
<dbReference type="HAMAP" id="MF_00231">
    <property type="entry name" value="eIF_2_alpha"/>
    <property type="match status" value="1"/>
</dbReference>
<dbReference type="InterPro" id="IPR012340">
    <property type="entry name" value="NA-bd_OB-fold"/>
</dbReference>
<dbReference type="InterPro" id="IPR003029">
    <property type="entry name" value="S1_domain"/>
</dbReference>
<dbReference type="InterPro" id="IPR044126">
    <property type="entry name" value="S1_IF2_alpha"/>
</dbReference>
<dbReference type="InterPro" id="IPR022964">
    <property type="entry name" value="TIF2_asu_arc"/>
</dbReference>
<dbReference type="InterPro" id="IPR024055">
    <property type="entry name" value="TIF2_asu_C"/>
</dbReference>
<dbReference type="InterPro" id="IPR024054">
    <property type="entry name" value="TIF2_asu_middle_sf"/>
</dbReference>
<dbReference type="InterPro" id="IPR011488">
    <property type="entry name" value="TIF_2_asu"/>
</dbReference>
<dbReference type="NCBIfam" id="NF003062">
    <property type="entry name" value="PRK03987.1-1"/>
    <property type="match status" value="1"/>
</dbReference>
<dbReference type="PANTHER" id="PTHR10602">
    <property type="entry name" value="EUKARYOTIC TRANSLATION INITIATION FACTOR 2 SUBUNIT 1"/>
    <property type="match status" value="1"/>
</dbReference>
<dbReference type="PANTHER" id="PTHR10602:SF0">
    <property type="entry name" value="EUKARYOTIC TRANSLATION INITIATION FACTOR 2 SUBUNIT 1"/>
    <property type="match status" value="1"/>
</dbReference>
<dbReference type="Pfam" id="PF07541">
    <property type="entry name" value="EIF_2_alpha"/>
    <property type="match status" value="1"/>
</dbReference>
<dbReference type="Pfam" id="PF00575">
    <property type="entry name" value="S1"/>
    <property type="match status" value="1"/>
</dbReference>
<dbReference type="SMART" id="SM00316">
    <property type="entry name" value="S1"/>
    <property type="match status" value="1"/>
</dbReference>
<dbReference type="SUPFAM" id="SSF110993">
    <property type="entry name" value="eIF-2-alpha, C-terminal domain"/>
    <property type="match status" value="1"/>
</dbReference>
<dbReference type="SUPFAM" id="SSF116742">
    <property type="entry name" value="eIF2alpha middle domain-like"/>
    <property type="match status" value="1"/>
</dbReference>
<dbReference type="SUPFAM" id="SSF50249">
    <property type="entry name" value="Nucleic acid-binding proteins"/>
    <property type="match status" value="1"/>
</dbReference>
<dbReference type="PROSITE" id="PS50126">
    <property type="entry name" value="S1"/>
    <property type="match status" value="1"/>
</dbReference>
<keyword id="KW-0396">Initiation factor</keyword>
<keyword id="KW-0648">Protein biosynthesis</keyword>
<keyword id="KW-1185">Reference proteome</keyword>
<keyword id="KW-0694">RNA-binding</keyword>
<accession>Q8ZTY5</accession>
<feature type="chain" id="PRO_0000137398" description="Translation initiation factor 2 subunit alpha">
    <location>
        <begin position="1"/>
        <end position="265"/>
    </location>
</feature>
<feature type="domain" description="S1 motif" evidence="1">
    <location>
        <begin position="12"/>
        <end position="82"/>
    </location>
</feature>
<proteinExistence type="inferred from homology"/>
<gene>
    <name evidence="1" type="primary">eif2a</name>
    <name type="ordered locus">PAE3032</name>
</gene>
<evidence type="ECO:0000255" key="1">
    <source>
        <dbReference type="HAMAP-Rule" id="MF_00231"/>
    </source>
</evidence>
<name>IF2A_PYRAE</name>
<protein>
    <recommendedName>
        <fullName evidence="1">Translation initiation factor 2 subunit alpha</fullName>
    </recommendedName>
    <alternativeName>
        <fullName evidence="1">aIF2-alpha</fullName>
    </alternativeName>
    <alternativeName>
        <fullName evidence="1">eIF-2-alpha</fullName>
    </alternativeName>
</protein>
<comment type="function">
    <text evidence="1">eIF-2 functions in the early steps of protein synthesis by forming a ternary complex with GTP and initiator tRNA.</text>
</comment>
<comment type="subunit">
    <text evidence="1">Heterotrimer composed of an alpha, a beta and a gamma chain.</text>
</comment>
<comment type="similarity">
    <text evidence="1">Belongs to the eIF-2-alpha family.</text>
</comment>
<reference key="1">
    <citation type="journal article" date="2002" name="Proc. Natl. Acad. Sci. U.S.A.">
        <title>Genome sequence of the hyperthermophilic crenarchaeon Pyrobaculum aerophilum.</title>
        <authorList>
            <person name="Fitz-Gibbon S.T."/>
            <person name="Ladner H."/>
            <person name="Kim U.-J."/>
            <person name="Stetter K.O."/>
            <person name="Simon M.I."/>
            <person name="Miller J.H."/>
        </authorList>
    </citation>
    <scope>NUCLEOTIDE SEQUENCE [LARGE SCALE GENOMIC DNA]</scope>
    <source>
        <strain>ATCC 51768 / DSM 7523 / JCM 9630 / CIP 104966 / NBRC 100827 / IM2</strain>
    </source>
</reference>